<feature type="chain" id="PRO_1000024377" description="Iron-binding protein IscA">
    <location>
        <begin position="1"/>
        <end position="107"/>
    </location>
</feature>
<feature type="binding site" evidence="1">
    <location>
        <position position="35"/>
    </location>
    <ligand>
        <name>Fe cation</name>
        <dbReference type="ChEBI" id="CHEBI:24875"/>
    </ligand>
</feature>
<feature type="binding site" evidence="1">
    <location>
        <position position="99"/>
    </location>
    <ligand>
        <name>Fe cation</name>
        <dbReference type="ChEBI" id="CHEBI:24875"/>
    </ligand>
</feature>
<feature type="binding site" evidence="1">
    <location>
        <position position="101"/>
    </location>
    <ligand>
        <name>Fe cation</name>
        <dbReference type="ChEBI" id="CHEBI:24875"/>
    </ligand>
</feature>
<keyword id="KW-0408">Iron</keyword>
<keyword id="KW-0479">Metal-binding</keyword>
<keyword id="KW-1185">Reference proteome</keyword>
<reference key="1">
    <citation type="journal article" date="2005" name="Nucleic Acids Res.">
        <title>Genome dynamics and diversity of Shigella species, the etiologic agents of bacillary dysentery.</title>
        <authorList>
            <person name="Yang F."/>
            <person name="Yang J."/>
            <person name="Zhang X."/>
            <person name="Chen L."/>
            <person name="Jiang Y."/>
            <person name="Yan Y."/>
            <person name="Tang X."/>
            <person name="Wang J."/>
            <person name="Xiong Z."/>
            <person name="Dong J."/>
            <person name="Xue Y."/>
            <person name="Zhu Y."/>
            <person name="Xu X."/>
            <person name="Sun L."/>
            <person name="Chen S."/>
            <person name="Nie H."/>
            <person name="Peng J."/>
            <person name="Xu J."/>
            <person name="Wang Y."/>
            <person name="Yuan Z."/>
            <person name="Wen Y."/>
            <person name="Yao Z."/>
            <person name="Shen Y."/>
            <person name="Qiang B."/>
            <person name="Hou Y."/>
            <person name="Yu J."/>
            <person name="Jin Q."/>
        </authorList>
    </citation>
    <scope>NUCLEOTIDE SEQUENCE [LARGE SCALE GENOMIC DNA]</scope>
    <source>
        <strain>Sd197</strain>
    </source>
</reference>
<gene>
    <name evidence="1" type="primary">iscA</name>
    <name type="ordered locus">SDY_2724</name>
</gene>
<protein>
    <recommendedName>
        <fullName evidence="1">Iron-binding protein IscA</fullName>
    </recommendedName>
    <alternativeName>
        <fullName evidence="1">Iron-sulfur cluster assembly protein</fullName>
    </alternativeName>
</protein>
<sequence length="107" mass="11556">MSITLSDSAAARVNTFLANRGKGFGLRLGVRTSGCSGMAYVLEFVDEPTPEDIVFEDKGVKVVVDGKSLQFLDGTQLDFVKEGLNEGFKFTNPNVKDECGCGESFHV</sequence>
<evidence type="ECO:0000255" key="1">
    <source>
        <dbReference type="HAMAP-Rule" id="MF_01429"/>
    </source>
</evidence>
<accession>Q32D36</accession>
<name>ISCA_SHIDS</name>
<dbReference type="EMBL" id="CP000034">
    <property type="protein sequence ID" value="ABB62769.1"/>
    <property type="molecule type" value="Genomic_DNA"/>
</dbReference>
<dbReference type="RefSeq" id="WP_000028953.1">
    <property type="nucleotide sequence ID" value="NC_007606.1"/>
</dbReference>
<dbReference type="RefSeq" id="YP_404260.1">
    <property type="nucleotide sequence ID" value="NC_007606.1"/>
</dbReference>
<dbReference type="SMR" id="Q32D36"/>
<dbReference type="STRING" id="300267.SDY_2724"/>
<dbReference type="EnsemblBacteria" id="ABB62769">
    <property type="protein sequence ID" value="ABB62769"/>
    <property type="gene ID" value="SDY_2724"/>
</dbReference>
<dbReference type="GeneID" id="93774608"/>
<dbReference type="KEGG" id="sdy:SDY_2724"/>
<dbReference type="PATRIC" id="fig|300267.13.peg.3286"/>
<dbReference type="HOGENOM" id="CLU_069054_5_1_6"/>
<dbReference type="Proteomes" id="UP000002716">
    <property type="component" value="Chromosome"/>
</dbReference>
<dbReference type="GO" id="GO:0005829">
    <property type="term" value="C:cytosol"/>
    <property type="evidence" value="ECO:0007669"/>
    <property type="project" value="TreeGrafter"/>
</dbReference>
<dbReference type="GO" id="GO:0051537">
    <property type="term" value="F:2 iron, 2 sulfur cluster binding"/>
    <property type="evidence" value="ECO:0007669"/>
    <property type="project" value="TreeGrafter"/>
</dbReference>
<dbReference type="GO" id="GO:0005506">
    <property type="term" value="F:iron ion binding"/>
    <property type="evidence" value="ECO:0007669"/>
    <property type="project" value="UniProtKB-UniRule"/>
</dbReference>
<dbReference type="GO" id="GO:0016226">
    <property type="term" value="P:iron-sulfur cluster assembly"/>
    <property type="evidence" value="ECO:0007669"/>
    <property type="project" value="UniProtKB-UniRule"/>
</dbReference>
<dbReference type="FunFam" id="2.60.300.12:FF:000001">
    <property type="entry name" value="Iron-binding protein IscA"/>
    <property type="match status" value="1"/>
</dbReference>
<dbReference type="Gene3D" id="2.60.300.12">
    <property type="entry name" value="HesB-like domain"/>
    <property type="match status" value="1"/>
</dbReference>
<dbReference type="HAMAP" id="MF_01429">
    <property type="entry name" value="Fe_S_insert_IscA"/>
    <property type="match status" value="1"/>
</dbReference>
<dbReference type="InterPro" id="IPR050322">
    <property type="entry name" value="Fe-S_cluster_asmbl/transfer"/>
</dbReference>
<dbReference type="InterPro" id="IPR000361">
    <property type="entry name" value="FeS_biogenesis"/>
</dbReference>
<dbReference type="InterPro" id="IPR016092">
    <property type="entry name" value="FeS_cluster_insertion"/>
</dbReference>
<dbReference type="InterPro" id="IPR017870">
    <property type="entry name" value="FeS_cluster_insertion_CS"/>
</dbReference>
<dbReference type="InterPro" id="IPR035903">
    <property type="entry name" value="HesB-like_dom_sf"/>
</dbReference>
<dbReference type="InterPro" id="IPR011302">
    <property type="entry name" value="IscA_proteobacteria"/>
</dbReference>
<dbReference type="NCBIfam" id="TIGR00049">
    <property type="entry name" value="iron-sulfur cluster assembly accessory protein"/>
    <property type="match status" value="1"/>
</dbReference>
<dbReference type="NCBIfam" id="TIGR02011">
    <property type="entry name" value="IscA"/>
    <property type="match status" value="1"/>
</dbReference>
<dbReference type="NCBIfam" id="NF007049">
    <property type="entry name" value="PRK09502.1"/>
    <property type="match status" value="1"/>
</dbReference>
<dbReference type="PANTHER" id="PTHR10072:SF41">
    <property type="entry name" value="IRON-SULFUR CLUSTER ASSEMBLY 1 HOMOLOG, MITOCHONDRIAL"/>
    <property type="match status" value="1"/>
</dbReference>
<dbReference type="PANTHER" id="PTHR10072">
    <property type="entry name" value="IRON-SULFUR CLUSTER ASSEMBLY PROTEIN"/>
    <property type="match status" value="1"/>
</dbReference>
<dbReference type="Pfam" id="PF01521">
    <property type="entry name" value="Fe-S_biosyn"/>
    <property type="match status" value="1"/>
</dbReference>
<dbReference type="SUPFAM" id="SSF89360">
    <property type="entry name" value="HesB-like domain"/>
    <property type="match status" value="1"/>
</dbReference>
<dbReference type="PROSITE" id="PS01152">
    <property type="entry name" value="HESB"/>
    <property type="match status" value="1"/>
</dbReference>
<proteinExistence type="inferred from homology"/>
<comment type="function">
    <text evidence="1">Is able to transfer iron-sulfur clusters to apo-ferredoxin. Multiple cycles of [2Fe2S] cluster formation and transfer are observed, suggesting that IscA acts catalytically. Recruits intracellular free iron so as to provide iron for the assembly of transient iron-sulfur cluster in IscU in the presence of IscS, L-cysteine and the thioredoxin reductase system TrxA/TrxB.</text>
</comment>
<comment type="cofactor">
    <cofactor evidence="1">
        <name>Fe cation</name>
        <dbReference type="ChEBI" id="CHEBI:24875"/>
    </cofactor>
    <text evidence="1">Binds 2 iron ions per dimer. The dimer may bind additional iron ions.</text>
</comment>
<comment type="subunit">
    <text evidence="1">Homodimer; may form tetramers and higher multimers.</text>
</comment>
<comment type="similarity">
    <text evidence="1">Belongs to the HesB/IscA family.</text>
</comment>
<organism>
    <name type="scientific">Shigella dysenteriae serotype 1 (strain Sd197)</name>
    <dbReference type="NCBI Taxonomy" id="300267"/>
    <lineage>
        <taxon>Bacteria</taxon>
        <taxon>Pseudomonadati</taxon>
        <taxon>Pseudomonadota</taxon>
        <taxon>Gammaproteobacteria</taxon>
        <taxon>Enterobacterales</taxon>
        <taxon>Enterobacteriaceae</taxon>
        <taxon>Shigella</taxon>
    </lineage>
</organism>